<protein>
    <recommendedName>
        <fullName evidence="1">Elongation factor 4</fullName>
        <shortName evidence="1">EF-4</shortName>
        <ecNumber evidence="1">3.6.5.n1</ecNumber>
    </recommendedName>
    <alternativeName>
        <fullName evidence="1">Ribosomal back-translocase LepA</fullName>
    </alternativeName>
</protein>
<feature type="chain" id="PRO_1000118046" description="Elongation factor 4">
    <location>
        <begin position="1"/>
        <end position="615"/>
    </location>
</feature>
<feature type="domain" description="tr-type G">
    <location>
        <begin position="14"/>
        <end position="200"/>
    </location>
</feature>
<feature type="binding site" evidence="1">
    <location>
        <begin position="26"/>
        <end position="31"/>
    </location>
    <ligand>
        <name>GTP</name>
        <dbReference type="ChEBI" id="CHEBI:37565"/>
    </ligand>
</feature>
<feature type="binding site" evidence="1">
    <location>
        <begin position="147"/>
        <end position="150"/>
    </location>
    <ligand>
        <name>GTP</name>
        <dbReference type="ChEBI" id="CHEBI:37565"/>
    </ligand>
</feature>
<evidence type="ECO:0000255" key="1">
    <source>
        <dbReference type="HAMAP-Rule" id="MF_00071"/>
    </source>
</evidence>
<keyword id="KW-1003">Cell membrane</keyword>
<keyword id="KW-0342">GTP-binding</keyword>
<keyword id="KW-0378">Hydrolase</keyword>
<keyword id="KW-0472">Membrane</keyword>
<keyword id="KW-0547">Nucleotide-binding</keyword>
<keyword id="KW-0648">Protein biosynthesis</keyword>
<keyword id="KW-1185">Reference proteome</keyword>
<sequence length="615" mass="68300">MSTNFAATTFTDPSKIRNFCIIAHIDHGKSTLADRILQLSQVVEERDMRDQYLDNMDIERERGITIKAQNVRLPWIPRSGEFEGQEIVMQMIDTPGHVDFTYEVSRALEACEGAILLVDAAQGIEAQTLANLYLAMENDLEIIPVLNKIDLPAADPEKYALEIAHIIGCEPEEVLRVSGKTGEGVPELLDKVAELIPAPTSEFGEDAPARAMVFDSVYDTYRGVVTYIRMMDGKLTPRQKVTMMATGTNHELLEVGIVSPTMQKCKGLGPGEVGYLITGVKNVRETKVGDTITWASNGASEPLKGYADPNPMVYSGLFPISQADFPDLRDALEKLQLNDASLTFEPETSVALGFGFRCGFLGLLHMEITRDRLEREFGLDLISTAPSVTYRVVAEDGEESMVHNPSDWPGGKLREVYEPIVKMTIIVPEEFVGSTMELCQSKRGQMGGMDYLSEDRVELRYTMPLGEIIFDFFDMLKSRTKGYASLNYEEAGEQLADLVKVDILLNGDPVDAFSAIVHRDSAQWYGNKMTKKLKELIPRQQFEVPVQAAIGSKIIARENIRAMRKDVLAKCYGGDISRKRKLLEKQKAGKKRMKSIGSVSVPQEAFVAALSTDAE</sequence>
<organism>
    <name type="scientific">Corynebacterium aurimucosum (strain ATCC 700975 / DSM 44827 / CIP 107346 / CN-1)</name>
    <name type="common">Corynebacterium nigricans</name>
    <dbReference type="NCBI Taxonomy" id="548476"/>
    <lineage>
        <taxon>Bacteria</taxon>
        <taxon>Bacillati</taxon>
        <taxon>Actinomycetota</taxon>
        <taxon>Actinomycetes</taxon>
        <taxon>Mycobacteriales</taxon>
        <taxon>Corynebacteriaceae</taxon>
        <taxon>Corynebacterium</taxon>
    </lineage>
</organism>
<name>LEPA_CORA7</name>
<reference key="1">
    <citation type="journal article" date="2010" name="BMC Genomics">
        <title>Complete genome sequence and lifestyle of black-pigmented Corynebacterium aurimucosum ATCC 700975 (formerly C. nigricans CN-1) isolated from a vaginal swab of a woman with spontaneous abortion.</title>
        <authorList>
            <person name="Trost E."/>
            <person name="Gotker S."/>
            <person name="Schneider J."/>
            <person name="Schneiker-Bekel S."/>
            <person name="Szczepanowski R."/>
            <person name="Tilker A."/>
            <person name="Viehoever P."/>
            <person name="Arnold W."/>
            <person name="Bekel T."/>
            <person name="Blom J."/>
            <person name="Gartemann K.H."/>
            <person name="Linke B."/>
            <person name="Goesmann A."/>
            <person name="Puhler A."/>
            <person name="Shukla S.K."/>
            <person name="Tauch A."/>
        </authorList>
    </citation>
    <scope>NUCLEOTIDE SEQUENCE [LARGE SCALE GENOMIC DNA]</scope>
    <source>
        <strain>ATCC 700975 / DSM 44827 / CIP 107346 / CN-1</strain>
    </source>
</reference>
<dbReference type="EC" id="3.6.5.n1" evidence="1"/>
<dbReference type="EMBL" id="CP001601">
    <property type="protein sequence ID" value="ACP33435.1"/>
    <property type="molecule type" value="Genomic_DNA"/>
</dbReference>
<dbReference type="RefSeq" id="WP_010190853.1">
    <property type="nucleotide sequence ID" value="NC_012590.1"/>
</dbReference>
<dbReference type="SMR" id="C3PHY1"/>
<dbReference type="STRING" id="548476.cauri_1842"/>
<dbReference type="GeneID" id="31924476"/>
<dbReference type="KEGG" id="car:cauri_1842"/>
<dbReference type="eggNOG" id="COG0481">
    <property type="taxonomic scope" value="Bacteria"/>
</dbReference>
<dbReference type="HOGENOM" id="CLU_009995_3_3_11"/>
<dbReference type="OrthoDB" id="9801472at2"/>
<dbReference type="Proteomes" id="UP000002077">
    <property type="component" value="Chromosome"/>
</dbReference>
<dbReference type="GO" id="GO:0005886">
    <property type="term" value="C:plasma membrane"/>
    <property type="evidence" value="ECO:0007669"/>
    <property type="project" value="UniProtKB-SubCell"/>
</dbReference>
<dbReference type="GO" id="GO:0005525">
    <property type="term" value="F:GTP binding"/>
    <property type="evidence" value="ECO:0007669"/>
    <property type="project" value="UniProtKB-UniRule"/>
</dbReference>
<dbReference type="GO" id="GO:0003924">
    <property type="term" value="F:GTPase activity"/>
    <property type="evidence" value="ECO:0007669"/>
    <property type="project" value="UniProtKB-UniRule"/>
</dbReference>
<dbReference type="GO" id="GO:0043022">
    <property type="term" value="F:ribosome binding"/>
    <property type="evidence" value="ECO:0007669"/>
    <property type="project" value="UniProtKB-UniRule"/>
</dbReference>
<dbReference type="GO" id="GO:0003746">
    <property type="term" value="F:translation elongation factor activity"/>
    <property type="evidence" value="ECO:0007669"/>
    <property type="project" value="UniProtKB-UniRule"/>
</dbReference>
<dbReference type="GO" id="GO:0045727">
    <property type="term" value="P:positive regulation of translation"/>
    <property type="evidence" value="ECO:0007669"/>
    <property type="project" value="UniProtKB-UniRule"/>
</dbReference>
<dbReference type="CDD" id="cd03699">
    <property type="entry name" value="EF4_II"/>
    <property type="match status" value="1"/>
</dbReference>
<dbReference type="CDD" id="cd16260">
    <property type="entry name" value="EF4_III"/>
    <property type="match status" value="1"/>
</dbReference>
<dbReference type="CDD" id="cd01890">
    <property type="entry name" value="LepA"/>
    <property type="match status" value="1"/>
</dbReference>
<dbReference type="CDD" id="cd03709">
    <property type="entry name" value="lepA_C"/>
    <property type="match status" value="1"/>
</dbReference>
<dbReference type="FunFam" id="3.30.70.240:FF:000011">
    <property type="entry name" value="Elongation factor 4"/>
    <property type="match status" value="1"/>
</dbReference>
<dbReference type="FunFam" id="3.40.50.300:FF:000078">
    <property type="entry name" value="Elongation factor 4"/>
    <property type="match status" value="1"/>
</dbReference>
<dbReference type="FunFam" id="2.40.30.10:FF:000015">
    <property type="entry name" value="Translation factor GUF1, mitochondrial"/>
    <property type="match status" value="1"/>
</dbReference>
<dbReference type="FunFam" id="3.30.70.2570:FF:000001">
    <property type="entry name" value="Translation factor GUF1, mitochondrial"/>
    <property type="match status" value="1"/>
</dbReference>
<dbReference type="FunFam" id="3.30.70.870:FF:000004">
    <property type="entry name" value="Translation factor GUF1, mitochondrial"/>
    <property type="match status" value="1"/>
</dbReference>
<dbReference type="Gene3D" id="3.30.70.240">
    <property type="match status" value="1"/>
</dbReference>
<dbReference type="Gene3D" id="3.30.70.2570">
    <property type="entry name" value="Elongation factor 4, C-terminal domain"/>
    <property type="match status" value="1"/>
</dbReference>
<dbReference type="Gene3D" id="3.30.70.870">
    <property type="entry name" value="Elongation Factor G (Translational Gtpase), domain 3"/>
    <property type="match status" value="1"/>
</dbReference>
<dbReference type="Gene3D" id="3.40.50.300">
    <property type="entry name" value="P-loop containing nucleotide triphosphate hydrolases"/>
    <property type="match status" value="1"/>
</dbReference>
<dbReference type="Gene3D" id="2.40.30.10">
    <property type="entry name" value="Translation factors"/>
    <property type="match status" value="1"/>
</dbReference>
<dbReference type="HAMAP" id="MF_00071">
    <property type="entry name" value="LepA"/>
    <property type="match status" value="1"/>
</dbReference>
<dbReference type="InterPro" id="IPR006297">
    <property type="entry name" value="EF-4"/>
</dbReference>
<dbReference type="InterPro" id="IPR035647">
    <property type="entry name" value="EFG_III/V"/>
</dbReference>
<dbReference type="InterPro" id="IPR000640">
    <property type="entry name" value="EFG_V-like"/>
</dbReference>
<dbReference type="InterPro" id="IPR004161">
    <property type="entry name" value="EFTu-like_2"/>
</dbReference>
<dbReference type="InterPro" id="IPR031157">
    <property type="entry name" value="G_TR_CS"/>
</dbReference>
<dbReference type="InterPro" id="IPR038363">
    <property type="entry name" value="LepA_C_sf"/>
</dbReference>
<dbReference type="InterPro" id="IPR013842">
    <property type="entry name" value="LepA_CTD"/>
</dbReference>
<dbReference type="InterPro" id="IPR035654">
    <property type="entry name" value="LepA_IV"/>
</dbReference>
<dbReference type="InterPro" id="IPR027417">
    <property type="entry name" value="P-loop_NTPase"/>
</dbReference>
<dbReference type="InterPro" id="IPR005225">
    <property type="entry name" value="Small_GTP-bd"/>
</dbReference>
<dbReference type="InterPro" id="IPR000795">
    <property type="entry name" value="T_Tr_GTP-bd_dom"/>
</dbReference>
<dbReference type="InterPro" id="IPR009000">
    <property type="entry name" value="Transl_B-barrel_sf"/>
</dbReference>
<dbReference type="NCBIfam" id="TIGR01393">
    <property type="entry name" value="lepA"/>
    <property type="match status" value="1"/>
</dbReference>
<dbReference type="NCBIfam" id="TIGR00231">
    <property type="entry name" value="small_GTP"/>
    <property type="match status" value="1"/>
</dbReference>
<dbReference type="PANTHER" id="PTHR43512:SF4">
    <property type="entry name" value="TRANSLATION FACTOR GUF1 HOMOLOG, CHLOROPLASTIC"/>
    <property type="match status" value="1"/>
</dbReference>
<dbReference type="PANTHER" id="PTHR43512">
    <property type="entry name" value="TRANSLATION FACTOR GUF1-RELATED"/>
    <property type="match status" value="1"/>
</dbReference>
<dbReference type="Pfam" id="PF00679">
    <property type="entry name" value="EFG_C"/>
    <property type="match status" value="1"/>
</dbReference>
<dbReference type="Pfam" id="PF00009">
    <property type="entry name" value="GTP_EFTU"/>
    <property type="match status" value="1"/>
</dbReference>
<dbReference type="Pfam" id="PF03144">
    <property type="entry name" value="GTP_EFTU_D2"/>
    <property type="match status" value="1"/>
</dbReference>
<dbReference type="Pfam" id="PF06421">
    <property type="entry name" value="LepA_C"/>
    <property type="match status" value="1"/>
</dbReference>
<dbReference type="PRINTS" id="PR00315">
    <property type="entry name" value="ELONGATNFCT"/>
</dbReference>
<dbReference type="SMART" id="SM00838">
    <property type="entry name" value="EFG_C"/>
    <property type="match status" value="1"/>
</dbReference>
<dbReference type="SUPFAM" id="SSF54980">
    <property type="entry name" value="EF-G C-terminal domain-like"/>
    <property type="match status" value="2"/>
</dbReference>
<dbReference type="SUPFAM" id="SSF52540">
    <property type="entry name" value="P-loop containing nucleoside triphosphate hydrolases"/>
    <property type="match status" value="1"/>
</dbReference>
<dbReference type="SUPFAM" id="SSF50447">
    <property type="entry name" value="Translation proteins"/>
    <property type="match status" value="1"/>
</dbReference>
<dbReference type="PROSITE" id="PS00301">
    <property type="entry name" value="G_TR_1"/>
    <property type="match status" value="1"/>
</dbReference>
<dbReference type="PROSITE" id="PS51722">
    <property type="entry name" value="G_TR_2"/>
    <property type="match status" value="1"/>
</dbReference>
<gene>
    <name evidence="1" type="primary">lepA</name>
    <name type="ordered locus">cauri_1842</name>
</gene>
<proteinExistence type="inferred from homology"/>
<comment type="function">
    <text evidence="1">Required for accurate and efficient protein synthesis under certain stress conditions. May act as a fidelity factor of the translation reaction, by catalyzing a one-codon backward translocation of tRNAs on improperly translocated ribosomes. Back-translocation proceeds from a post-translocation (POST) complex to a pre-translocation (PRE) complex, thus giving elongation factor G a second chance to translocate the tRNAs correctly. Binds to ribosomes in a GTP-dependent manner.</text>
</comment>
<comment type="catalytic activity">
    <reaction evidence="1">
        <text>GTP + H2O = GDP + phosphate + H(+)</text>
        <dbReference type="Rhea" id="RHEA:19669"/>
        <dbReference type="ChEBI" id="CHEBI:15377"/>
        <dbReference type="ChEBI" id="CHEBI:15378"/>
        <dbReference type="ChEBI" id="CHEBI:37565"/>
        <dbReference type="ChEBI" id="CHEBI:43474"/>
        <dbReference type="ChEBI" id="CHEBI:58189"/>
        <dbReference type="EC" id="3.6.5.n1"/>
    </reaction>
</comment>
<comment type="subcellular location">
    <subcellularLocation>
        <location evidence="1">Cell membrane</location>
        <topology evidence="1">Peripheral membrane protein</topology>
        <orientation evidence="1">Cytoplasmic side</orientation>
    </subcellularLocation>
</comment>
<comment type="similarity">
    <text evidence="1">Belongs to the TRAFAC class translation factor GTPase superfamily. Classic translation factor GTPase family. LepA subfamily.</text>
</comment>
<accession>C3PHY1</accession>